<accession>Q9QZS6</accession>
<accession>Q5NCR0</accession>
<reference key="1">
    <citation type="journal article" date="1999" name="Cell">
        <title>A novel role for 3-O-sulfated heparan sulfate in herpes simplex virus 1 entry.</title>
        <authorList>
            <person name="Shukla D."/>
            <person name="Liu J."/>
            <person name="Blaiklock P."/>
            <person name="Shworak N.W."/>
            <person name="Bai X."/>
            <person name="Esko J.D."/>
            <person name="Cohen G.H."/>
            <person name="Eisenberg R.J."/>
            <person name="Rosenberg R.D."/>
            <person name="Spear P.G."/>
        </authorList>
    </citation>
    <scope>NUCLEOTIDE SEQUENCE [MRNA]</scope>
    <scope>SUBCELLULAR LOCATION</scope>
    <source>
        <strain>C57BL/6J</strain>
    </source>
</reference>
<reference key="2">
    <citation type="journal article" date="2009" name="PLoS Biol.">
        <title>Lineage-specific biology revealed by a finished genome assembly of the mouse.</title>
        <authorList>
            <person name="Church D.M."/>
            <person name="Goodstadt L."/>
            <person name="Hillier L.W."/>
            <person name="Zody M.C."/>
            <person name="Goldstein S."/>
            <person name="She X."/>
            <person name="Bult C.J."/>
            <person name="Agarwala R."/>
            <person name="Cherry J.L."/>
            <person name="DiCuccio M."/>
            <person name="Hlavina W."/>
            <person name="Kapustin Y."/>
            <person name="Meric P."/>
            <person name="Maglott D."/>
            <person name="Birtle Z."/>
            <person name="Marques A.C."/>
            <person name="Graves T."/>
            <person name="Zhou S."/>
            <person name="Teague B."/>
            <person name="Potamousis K."/>
            <person name="Churas C."/>
            <person name="Place M."/>
            <person name="Herschleb J."/>
            <person name="Runnheim R."/>
            <person name="Forrest D."/>
            <person name="Amos-Landgraf J."/>
            <person name="Schwartz D.C."/>
            <person name="Cheng Z."/>
            <person name="Lindblad-Toh K."/>
            <person name="Eichler E.E."/>
            <person name="Ponting C.P."/>
        </authorList>
    </citation>
    <scope>NUCLEOTIDE SEQUENCE [LARGE SCALE GENOMIC DNA]</scope>
    <source>
        <strain>C57BL/6J</strain>
    </source>
</reference>
<reference key="3">
    <citation type="submission" date="2005-07" db="EMBL/GenBank/DDBJ databases">
        <authorList>
            <person name="Mural R.J."/>
            <person name="Adams M.D."/>
            <person name="Myers E.W."/>
            <person name="Smith H.O."/>
            <person name="Venter J.C."/>
        </authorList>
    </citation>
    <scope>NUCLEOTIDE SEQUENCE [LARGE SCALE GENOMIC DNA]</scope>
</reference>
<gene>
    <name type="primary">Hs3st3b1</name>
    <name type="synonym">3ost3b1</name>
    <name type="synonym">Hs3st3b</name>
</gene>
<comment type="function">
    <text evidence="1">Sulfotransferase that utilizes 3'-phospho-5'-adenylyl sulfate (PAPS) to catalyze the transfer of a sulfo group to an N-unsubstituted glucosamine linked to a 2-O-sulfo iduronic acid unit on heparan sulfate. Catalyzes the O-sulfation of glucosamine in IdoUA2S-GlcNS and also in IdoUA2S-GlcNH2. Unlike HS3ST1/3-OST-1, does not convert non-anticoagulant heparan sulfate to anticoagulant heparan sulfate (By similarity).</text>
</comment>
<comment type="catalytic activity">
    <reaction evidence="1">
        <text>alpha-D-glucosaminyl-[heparan sulfate](n) + 3'-phosphoadenylyl sulfate = 3-sulfo-alpha-D-glucosaminyl-[heparan sulfate](n) + adenosine 3',5'-bisphosphate + H(+)</text>
        <dbReference type="Rhea" id="RHEA:15461"/>
        <dbReference type="Rhea" id="RHEA-COMP:9830"/>
        <dbReference type="Rhea" id="RHEA-COMP:9831"/>
        <dbReference type="ChEBI" id="CHEBI:15378"/>
        <dbReference type="ChEBI" id="CHEBI:58339"/>
        <dbReference type="ChEBI" id="CHEBI:58343"/>
        <dbReference type="ChEBI" id="CHEBI:58388"/>
        <dbReference type="ChEBI" id="CHEBI:70975"/>
        <dbReference type="EC" id="2.8.2.30"/>
    </reaction>
</comment>
<comment type="subcellular location">
    <subcellularLocation>
        <location evidence="6">Golgi apparatus membrane</location>
        <topology evidence="6">Single-pass type II membrane protein</topology>
    </subcellularLocation>
</comment>
<comment type="similarity">
    <text evidence="5">Belongs to the sulfotransferase 1 family.</text>
</comment>
<feature type="chain" id="PRO_0000085220" description="Heparan sulfate glucosamine 3-O-sulfotransferase 3B1">
    <location>
        <begin position="1"/>
        <end position="390"/>
    </location>
</feature>
<feature type="topological domain" description="Cytoplasmic" evidence="3">
    <location>
        <begin position="1"/>
        <end position="32"/>
    </location>
</feature>
<feature type="transmembrane region" description="Helical; Signal-anchor for type II membrane protein" evidence="3">
    <location>
        <begin position="33"/>
        <end position="53"/>
    </location>
</feature>
<feature type="topological domain" description="Lumenal" evidence="3">
    <location>
        <begin position="54"/>
        <end position="390"/>
    </location>
</feature>
<feature type="region of interest" description="Disordered" evidence="4">
    <location>
        <begin position="1"/>
        <end position="25"/>
    </location>
</feature>
<feature type="region of interest" description="Disordered" evidence="4">
    <location>
        <begin position="79"/>
        <end position="125"/>
    </location>
</feature>
<feature type="binding site" evidence="2">
    <location>
        <begin position="147"/>
        <end position="151"/>
    </location>
    <ligand>
        <name>3'-phosphoadenylyl sulfate</name>
        <dbReference type="ChEBI" id="CHEBI:58339"/>
    </ligand>
</feature>
<feature type="binding site" evidence="2">
    <location>
        <begin position="169"/>
        <end position="175"/>
    </location>
    <ligand>
        <name>substrate</name>
    </ligand>
</feature>
<feature type="binding site" evidence="2">
    <location>
        <begin position="200"/>
        <end position="203"/>
    </location>
    <ligand>
        <name>substrate</name>
    </ligand>
</feature>
<feature type="binding site" evidence="2">
    <location>
        <position position="228"/>
    </location>
    <ligand>
        <name>3'-phosphoadenylyl sulfate</name>
        <dbReference type="ChEBI" id="CHEBI:58339"/>
    </ligand>
</feature>
<feature type="binding site" evidence="2">
    <location>
        <position position="236"/>
    </location>
    <ligand>
        <name>3'-phosphoadenylyl sulfate</name>
        <dbReference type="ChEBI" id="CHEBI:58339"/>
    </ligand>
</feature>
<feature type="binding site" evidence="2">
    <location>
        <begin position="268"/>
        <end position="269"/>
    </location>
    <ligand>
        <name>substrate</name>
    </ligand>
</feature>
<feature type="binding site" evidence="2">
    <location>
        <begin position="353"/>
        <end position="357"/>
    </location>
    <ligand>
        <name>3'-phosphoadenylyl sulfate</name>
        <dbReference type="ChEBI" id="CHEBI:58339"/>
    </ligand>
</feature>
<feature type="glycosylation site" description="N-linked (GlcNAc...) asparagine" evidence="3">
    <location>
        <position position="82"/>
    </location>
</feature>
<feature type="glycosylation site" description="N-linked (GlcNAc...) asparagine" evidence="3">
    <location>
        <position position="258"/>
    </location>
</feature>
<feature type="glycosylation site" description="N-linked (GlcNAc...) asparagine" evidence="3">
    <location>
        <position position="329"/>
    </location>
</feature>
<feature type="disulfide bond" evidence="2">
    <location>
        <begin position="336"/>
        <end position="348"/>
    </location>
</feature>
<feature type="sequence conflict" description="In Ref. 1; AAF04505." evidence="5" ref="1">
    <original>A</original>
    <variation>T</variation>
    <location>
        <position position="76"/>
    </location>
</feature>
<keyword id="KW-1015">Disulfide bond</keyword>
<keyword id="KW-0325">Glycoprotein</keyword>
<keyword id="KW-0333">Golgi apparatus</keyword>
<keyword id="KW-0472">Membrane</keyword>
<keyword id="KW-1185">Reference proteome</keyword>
<keyword id="KW-0735">Signal-anchor</keyword>
<keyword id="KW-0808">Transferase</keyword>
<keyword id="KW-0812">Transmembrane</keyword>
<keyword id="KW-1133">Transmembrane helix</keyword>
<evidence type="ECO:0000250" key="1">
    <source>
        <dbReference type="UniProtKB" id="Q9Y662"/>
    </source>
</evidence>
<evidence type="ECO:0000250" key="2">
    <source>
        <dbReference type="UniProtKB" id="Q9Y663"/>
    </source>
</evidence>
<evidence type="ECO:0000255" key="3"/>
<evidence type="ECO:0000256" key="4">
    <source>
        <dbReference type="SAM" id="MobiDB-lite"/>
    </source>
</evidence>
<evidence type="ECO:0000305" key="5"/>
<evidence type="ECO:0000305" key="6">
    <source>
    </source>
</evidence>
<protein>
    <recommendedName>
        <fullName>Heparan sulfate glucosamine 3-O-sulfotransferase 3B1</fullName>
        <ecNumber evidence="1">2.8.2.30</ecNumber>
    </recommendedName>
    <alternativeName>
        <fullName>Heparan sulfate D-glucosaminyl 3-O-sulfotransferase 3B1</fullName>
        <shortName>3-OST-3B</shortName>
        <shortName>Heparan sulfate 3-O-sulfotransferase 3B1</shortName>
        <shortName>m3-OST-3B</shortName>
    </alternativeName>
</protein>
<organism>
    <name type="scientific">Mus musculus</name>
    <name type="common">Mouse</name>
    <dbReference type="NCBI Taxonomy" id="10090"/>
    <lineage>
        <taxon>Eukaryota</taxon>
        <taxon>Metazoa</taxon>
        <taxon>Chordata</taxon>
        <taxon>Craniata</taxon>
        <taxon>Vertebrata</taxon>
        <taxon>Euteleostomi</taxon>
        <taxon>Mammalia</taxon>
        <taxon>Eutheria</taxon>
        <taxon>Euarchontoglires</taxon>
        <taxon>Glires</taxon>
        <taxon>Rodentia</taxon>
        <taxon>Myomorpha</taxon>
        <taxon>Muroidea</taxon>
        <taxon>Muridae</taxon>
        <taxon>Murinae</taxon>
        <taxon>Mus</taxon>
        <taxon>Mus</taxon>
    </lineage>
</organism>
<proteinExistence type="evidence at transcript level"/>
<dbReference type="EC" id="2.8.2.30" evidence="1"/>
<dbReference type="EMBL" id="AF168992">
    <property type="protein sequence ID" value="AAF04505.1"/>
    <property type="molecule type" value="mRNA"/>
</dbReference>
<dbReference type="EMBL" id="AL603889">
    <property type="status" value="NOT_ANNOTATED_CDS"/>
    <property type="molecule type" value="Genomic_DNA"/>
</dbReference>
<dbReference type="EMBL" id="CH466601">
    <property type="protein sequence ID" value="EDL10388.1"/>
    <property type="molecule type" value="Genomic_DNA"/>
</dbReference>
<dbReference type="CCDS" id="CCDS24838.1"/>
<dbReference type="RefSeq" id="NP_061275.2">
    <property type="nucleotide sequence ID" value="NM_018805.2"/>
</dbReference>
<dbReference type="SMR" id="Q9QZS6"/>
<dbReference type="FunCoup" id="Q9QZS6">
    <property type="interactions" value="311"/>
</dbReference>
<dbReference type="STRING" id="10090.ENSMUSP00000091647"/>
<dbReference type="GlyCosmos" id="Q9QZS6">
    <property type="glycosylation" value="3 sites, No reported glycans"/>
</dbReference>
<dbReference type="GlyGen" id="Q9QZS6">
    <property type="glycosylation" value="3 sites"/>
</dbReference>
<dbReference type="iPTMnet" id="Q9QZS6"/>
<dbReference type="PhosphoSitePlus" id="Q9QZS6"/>
<dbReference type="PaxDb" id="10090-ENSMUSP00000091647"/>
<dbReference type="ProteomicsDB" id="267166"/>
<dbReference type="Antibodypedia" id="25106">
    <property type="antibodies" value="35 antibodies from 16 providers"/>
</dbReference>
<dbReference type="DNASU" id="54710"/>
<dbReference type="Ensembl" id="ENSMUST00000094103.4">
    <property type="protein sequence ID" value="ENSMUSP00000091647.4"/>
    <property type="gene ID" value="ENSMUSG00000070407.6"/>
</dbReference>
<dbReference type="GeneID" id="54710"/>
<dbReference type="KEGG" id="mmu:54710"/>
<dbReference type="UCSC" id="uc007jkn.1">
    <property type="organism name" value="mouse"/>
</dbReference>
<dbReference type="AGR" id="MGI:1333853"/>
<dbReference type="CTD" id="9953"/>
<dbReference type="MGI" id="MGI:1333853">
    <property type="gene designation" value="Hs3st3b1"/>
</dbReference>
<dbReference type="VEuPathDB" id="HostDB:ENSMUSG00000070407"/>
<dbReference type="eggNOG" id="KOG3704">
    <property type="taxonomic scope" value="Eukaryota"/>
</dbReference>
<dbReference type="GeneTree" id="ENSGT00940000162568"/>
<dbReference type="HOGENOM" id="CLU_017703_0_1_1"/>
<dbReference type="InParanoid" id="Q9QZS6"/>
<dbReference type="OMA" id="FYCLVER"/>
<dbReference type="OrthoDB" id="411451at2759"/>
<dbReference type="PhylomeDB" id="Q9QZS6"/>
<dbReference type="TreeFam" id="TF350755"/>
<dbReference type="BRENDA" id="2.8.2.30">
    <property type="organism ID" value="3474"/>
</dbReference>
<dbReference type="Reactome" id="R-MMU-2022928">
    <property type="pathway name" value="HS-GAG biosynthesis"/>
</dbReference>
<dbReference type="BioGRID-ORCS" id="54710">
    <property type="hits" value="1 hit in 77 CRISPR screens"/>
</dbReference>
<dbReference type="ChiTaRS" id="Hs3st3b1">
    <property type="organism name" value="mouse"/>
</dbReference>
<dbReference type="PRO" id="PR:Q9QZS6"/>
<dbReference type="Proteomes" id="UP000000589">
    <property type="component" value="Chromosome 11"/>
</dbReference>
<dbReference type="RNAct" id="Q9QZS6">
    <property type="molecule type" value="protein"/>
</dbReference>
<dbReference type="Bgee" id="ENSMUSG00000070407">
    <property type="expression patterns" value="Expressed in epithelium of stomach and 165 other cell types or tissues"/>
</dbReference>
<dbReference type="GO" id="GO:0000139">
    <property type="term" value="C:Golgi membrane"/>
    <property type="evidence" value="ECO:0007669"/>
    <property type="project" value="UniProtKB-SubCell"/>
</dbReference>
<dbReference type="GO" id="GO:0005886">
    <property type="term" value="C:plasma membrane"/>
    <property type="evidence" value="ECO:0000314"/>
    <property type="project" value="MGI"/>
</dbReference>
<dbReference type="GO" id="GO:0008467">
    <property type="term" value="F:[heparan sulfate]-glucosamine 3-sulfotransferase activity"/>
    <property type="evidence" value="ECO:0000314"/>
    <property type="project" value="MGI"/>
</dbReference>
<dbReference type="GO" id="GO:0001658">
    <property type="term" value="P:branching involved in ureteric bud morphogenesis"/>
    <property type="evidence" value="ECO:0000316"/>
    <property type="project" value="MGI"/>
</dbReference>
<dbReference type="GO" id="GO:0006024">
    <property type="term" value="P:glycosaminoglycan biosynthetic process"/>
    <property type="evidence" value="ECO:0000250"/>
    <property type="project" value="UniProtKB"/>
</dbReference>
<dbReference type="GO" id="GO:0015012">
    <property type="term" value="P:heparan sulfate proteoglycan biosynthetic process"/>
    <property type="evidence" value="ECO:0000314"/>
    <property type="project" value="MGI"/>
</dbReference>
<dbReference type="FunFam" id="3.40.50.300:FF:000194">
    <property type="entry name" value="Sulfotransferase"/>
    <property type="match status" value="1"/>
</dbReference>
<dbReference type="Gene3D" id="3.40.50.300">
    <property type="entry name" value="P-loop containing nucleotide triphosphate hydrolases"/>
    <property type="match status" value="1"/>
</dbReference>
<dbReference type="InterPro" id="IPR037359">
    <property type="entry name" value="NST/OST"/>
</dbReference>
<dbReference type="InterPro" id="IPR027417">
    <property type="entry name" value="P-loop_NTPase"/>
</dbReference>
<dbReference type="InterPro" id="IPR000863">
    <property type="entry name" value="Sulfotransferase_dom"/>
</dbReference>
<dbReference type="PANTHER" id="PTHR10605:SF7">
    <property type="entry name" value="HEPARAN SULFATE GLUCOSAMINE 3-O-SULFOTRANSFERASE 3B1"/>
    <property type="match status" value="1"/>
</dbReference>
<dbReference type="PANTHER" id="PTHR10605">
    <property type="entry name" value="HEPARAN SULFATE SULFOTRANSFERASE"/>
    <property type="match status" value="1"/>
</dbReference>
<dbReference type="Pfam" id="PF00685">
    <property type="entry name" value="Sulfotransfer_1"/>
    <property type="match status" value="1"/>
</dbReference>
<dbReference type="SUPFAM" id="SSF52540">
    <property type="entry name" value="P-loop containing nucleoside triphosphate hydrolases"/>
    <property type="match status" value="1"/>
</dbReference>
<name>HS3SB_MOUSE</name>
<sequence length="390" mass="43296">MGQRLSGGRSCLDVPGRFLPQPPPPPPPVRRKLALLFAMLCIWLYMFLYSCAGSCTAAPGLLLLGSGSRATHAQPALVTAPNETSPKMPFRAPPANSLAAGKDKTVGAGSQEEQSPEAPDSPSPISSFFSGAGSKQLPQAIIIGVKKGGTRALLEFLRVHPDVRAVGAEPHFFDRSYHKGLAWYRDLMPRTLKGQITMEKTPSYFVTREAPARISAMSKDTKLIVVVRDPVTRAISDYTQTLSKRPDIPSFESLTFRNRSAGLIDTSWSAIQIGLYAKHLEPWLRHFPLGQMLFVSGERLVSDPAGELRRVQDFLGLKRIITDKHFYFNQTKGFPCLKKAEGSGKPHCLGKTKGRAHPTIAREVLRQLRDFYRPFNRKFYQMTGRDFGWD</sequence>